<keyword id="KW-0274">FAD</keyword>
<keyword id="KW-0285">Flavoprotein</keyword>
<keyword id="KW-0560">Oxidoreductase</keyword>
<name>CTB5_CERNC</name>
<dbReference type="EC" id="1.-.-.-" evidence="13"/>
<dbReference type="EMBL" id="DQ991507">
    <property type="protein sequence ID" value="ABK64182.1"/>
    <property type="molecule type" value="Genomic_DNA"/>
</dbReference>
<dbReference type="SMR" id="A0ST43"/>
<dbReference type="PHI-base" id="PHI:1046"/>
<dbReference type="GO" id="GO:0071949">
    <property type="term" value="F:FAD binding"/>
    <property type="evidence" value="ECO:0007669"/>
    <property type="project" value="InterPro"/>
</dbReference>
<dbReference type="GO" id="GO:0016491">
    <property type="term" value="F:oxidoreductase activity"/>
    <property type="evidence" value="ECO:0007669"/>
    <property type="project" value="UniProtKB-KW"/>
</dbReference>
<dbReference type="Gene3D" id="3.30.465.10">
    <property type="match status" value="1"/>
</dbReference>
<dbReference type="InterPro" id="IPR016166">
    <property type="entry name" value="FAD-bd_PCMH"/>
</dbReference>
<dbReference type="InterPro" id="IPR036318">
    <property type="entry name" value="FAD-bd_PCMH-like_sf"/>
</dbReference>
<dbReference type="InterPro" id="IPR016169">
    <property type="entry name" value="FAD-bd_PCMH_sub2"/>
</dbReference>
<dbReference type="InterPro" id="IPR050416">
    <property type="entry name" value="FAD-linked_Oxidoreductase"/>
</dbReference>
<dbReference type="InterPro" id="IPR006094">
    <property type="entry name" value="Oxid_FAD_bind_N"/>
</dbReference>
<dbReference type="PANTHER" id="PTHR42973">
    <property type="entry name" value="BINDING OXIDOREDUCTASE, PUTATIVE (AFU_ORTHOLOGUE AFUA_1G17690)-RELATED"/>
    <property type="match status" value="1"/>
</dbReference>
<dbReference type="PANTHER" id="PTHR42973:SF22">
    <property type="entry name" value="FAD-BINDING PCMH-TYPE DOMAIN-CONTAINING PROTEIN-RELATED"/>
    <property type="match status" value="1"/>
</dbReference>
<dbReference type="Pfam" id="PF01565">
    <property type="entry name" value="FAD_binding_4"/>
    <property type="match status" value="1"/>
</dbReference>
<dbReference type="SUPFAM" id="SSF56176">
    <property type="entry name" value="FAD-binding/transporter-associated domain-like"/>
    <property type="match status" value="1"/>
</dbReference>
<dbReference type="PROSITE" id="PS51387">
    <property type="entry name" value="FAD_PCMH"/>
    <property type="match status" value="1"/>
</dbReference>
<gene>
    <name evidence="11" type="primary">CTB5</name>
</gene>
<feature type="chain" id="PRO_0000444969" description="FAD-dependent monooxygenase CTB5">
    <location>
        <begin position="1"/>
        <end position="459"/>
    </location>
</feature>
<feature type="domain" description="FAD-binding PCMH-type" evidence="2">
    <location>
        <begin position="10"/>
        <end position="187"/>
    </location>
</feature>
<comment type="function">
    <text evidence="1 3 4 6 7 8 9 10">FAD-dependent monooxygenase; part of the gene cluster that mediates the biosynthesis of cercosporin, a light-activated, non-host-selective toxin (PubMed:15915645, PubMed:17074519, PubMed:26938470). The perylenequinone chromophore of cercosporin absorbs light energy to attain an electronically-activated triplet state and produces active oxygen species such as the hydroxyl radical, superoxide, hydrogen peroxide or singlet oxygen upon reaction with oxygen molecules (PubMed:11701851). These reactive oxygen species cause damage to various cellular components including lipids, proteins and nucleic acids (PubMed:11701851). The first step of cercosporin biosynthesis is performed by the polyketide synthase CTB1 which catalyzes the formation of nor-toralactone (PubMed:23108075, PubMed:26938470). The starter unit acyltransferase (SAT) domain of CTB1 initiates polyketide extension by the selective utilization of acetyl-CoA, which is elongated to the heptaketide in the beta-ketoacyl synthase (KS) domain by successive condensations with six malonyl units introduced by the malonyl acyltransferase (MAT) domain. The product template (PT) domain catalyzes C4-C9 and C2-C11 aldol cyclizations and dehydrations to a trihydroxynaphthalene, which is thought to be delivered to the thioesterase (TE) domain for product release (PubMed:23108075). The bifunctional enzyme CTB3 then methylates nor-toralactone to toralactone before conducting an unusual oxidative aromatic ring opening (PubMed:17074519, PubMed:26938470). The O-methyltransferase CTB2 further methylates the nascent OH-6 of the CBT3 product, blocking further oxidation at this site before the reductase CTB6 reduces the 2-oxopropyl ketone at position C7, giving naphthalene (PubMed:17660442, PubMed:26938470). The FAD-dependent monooxygenase CTB5 in concert with the multicopper oxidase CTB12 are responsible for homodimerization of naphthalene with CTB7 installing the dioxepine moiety, finally producing cercosporin (PubMed:17660442, PubMed:26938470, PubMed:30809363). The fasciclin domain-containing protein CTB11 might act with CTB5 and CTB12 whereas the roles of CTB9 and CTB10 have still to be elucidated (By similarity).</text>
</comment>
<comment type="pathway">
    <text evidence="5 6 8">Mycotoxin biosynthesis.</text>
</comment>
<comment type="induction">
    <text evidence="5">Expression is positively regulated by the cercosporin cluster-specific transcription factor CTB8 (PubMed:17462021). Expression is also affected by nitrogen and carbon sources and pH, and is also controlled by another transcription activator, CRG1, previously shown to regulate cercosporin production and resistance (PubMed:17462021).</text>
</comment>
<comment type="disruption phenotype">
    <text evidence="6 8">Abolishes the production of cercosporin but accumulates the naphthoquinones called cercoquinone A and cercoquinone B (PubMed:17660442, PubMed:26938470). Leads to dark orange-red mycelia with significant export of colored compounds into the agar (PubMed:26938470).</text>
</comment>
<comment type="similarity">
    <text evidence="12">Belongs to the oxygen-dependent FAD-linked oxidoreductase family.</text>
</comment>
<sequence length="459" mass="50822">MGSYFSLKNSDLHPSCIALPRSAEEVSKAVRTLSLGAHKWEGQCQFGVRGGGHTPFKGAASTDNGIVLDLLHMPSAGISPDYETITVSPSTTWDLVYEVLDAHNRSTLGTKVAGIGVGGASTSCGVSYFSPRYGYICDMVENWEVVLATGDIVNANANENADLWKALRGGINNFGIVTAVTLKAFEQGPFWGGQTFHSIETRQEHFKNHAKLASAHPYDPYAHYINTLVLANGGHWFIGNSIQYTKSDPPVAEPEVFKPFLKTERTPIFPGLPEDTLRVDNVTSFSREYAANTLYPQRWQFACISFAPDADFMETFFQMANDAMQQYVKLPGFKLILNYQPAPTVQLERNGAVDSLGPIQTEGNVVFVHWAVSYDESEAQFDDAITKSVQDLFHAANTKAKELGIYRHFIQPTYADSWQSPFDYRSKSTIEELVATSKKYDPLQVFQKQVPGGFKLPQI</sequence>
<organism>
    <name type="scientific">Cercospora nicotianae</name>
    <name type="common">Barn spot disease fungus</name>
    <dbReference type="NCBI Taxonomy" id="29003"/>
    <lineage>
        <taxon>Eukaryota</taxon>
        <taxon>Fungi</taxon>
        <taxon>Dikarya</taxon>
        <taxon>Ascomycota</taxon>
        <taxon>Pezizomycotina</taxon>
        <taxon>Dothideomycetes</taxon>
        <taxon>Dothideomycetidae</taxon>
        <taxon>Mycosphaerellales</taxon>
        <taxon>Mycosphaerellaceae</taxon>
        <taxon>Cercospora</taxon>
    </lineage>
</organism>
<reference key="1">
    <citation type="journal article" date="2007" name="Microbiology (Mosc.)">
        <title>Functional characterization of three genes encoding putative oxidoreductases required for cercosporin toxin biosynthesis in the fungus Cercospora nicotianae.</title>
        <authorList>
            <person name="Chen H.Q."/>
            <person name="Lee M.H."/>
            <person name="Chung K.R."/>
        </authorList>
    </citation>
    <scope>NUCLEOTIDE SEQUENCE [GENOMIC DNA]</scope>
    <scope>FUNCTION</scope>
    <scope>DISRUPTION PHENOTYPE</scope>
    <scope>PATHWAY</scope>
</reference>
<reference key="2">
    <citation type="journal article" date="2007" name="Mol. Microbiol.">
        <title>Molecular analysis of the cercosporin biosynthetic gene cluster in Cercospora nicotianae.</title>
        <authorList>
            <person name="Chen H."/>
            <person name="Lee M.H."/>
            <person name="Daub M.E."/>
            <person name="Chung K.R."/>
        </authorList>
    </citation>
    <scope>NUCLEOTIDE SEQUENCE [GENOMIC DNA]</scope>
    <scope>FUNCTION</scope>
    <scope>INDUCTION</scope>
    <scope>PATHWAY</scope>
</reference>
<reference key="3">
    <citation type="journal article" date="2000" name="Annu. Rev. Phytopathol.">
        <title>The photoactivated cercospora toxin cercosporin: contributions to plant disease and fundamental biology.</title>
        <authorList>
            <person name="Daub M.E."/>
            <person name="Ehrenshaft M."/>
        </authorList>
    </citation>
    <scope>REVIEW ON CERCOSPORIN</scope>
</reference>
<reference key="4">
    <citation type="journal article" date="2005" name="Mol. Plant Microbe Interact.">
        <title>The CTB1 gene encoding a fungal polyketide synthase is required for cercosporin biosynthesis and fungal virulence of Cercospora nicotianae.</title>
        <authorList>
            <person name="Choquer M."/>
            <person name="Dekkers K.L."/>
            <person name="Chen H.Q."/>
            <person name="Cao L."/>
            <person name="Ueng P.P."/>
            <person name="Daub M.E."/>
            <person name="Chung K.R."/>
        </authorList>
    </citation>
    <scope>FUNCTION</scope>
</reference>
<reference key="5">
    <citation type="journal article" date="2007" name="Fungal Genet. Biol.">
        <title>The Cercospora nicotianae gene encoding dual O-methyltransferase and FAD-dependent monooxygenase domains mediates cercosporin toxin biosynthesis.</title>
        <authorList>
            <person name="Dekkers K.L."/>
            <person name="You B.J."/>
            <person name="Gowda V.S."/>
            <person name="Liao H.L."/>
            <person name="Lee M.H."/>
            <person name="Bau H.J."/>
            <person name="Ueng P.P."/>
            <person name="Chung K.R."/>
        </authorList>
    </citation>
    <scope>FUNCTION</scope>
</reference>
<reference key="6">
    <citation type="journal article" date="2012" name="Chem. Commun. (Camb.)">
        <title>Analysis of the cercosporin polyketide synthase CTB1 reveals a new fungal thioesterase function.</title>
        <authorList>
            <person name="Newman A.G."/>
            <person name="Vagstad A.L."/>
            <person name="Belecki K."/>
            <person name="Scheerer J.R."/>
            <person name="Townsend C.A."/>
        </authorList>
    </citation>
    <scope>FUNCTION</scope>
</reference>
<reference key="7">
    <citation type="journal article" date="2016" name="J. Am. Chem. Soc.">
        <title>Molecular characterization of the cercosporin biosynthetic pathway in the fungal plant pathogen Cercospora nicotianae.</title>
        <authorList>
            <person name="Newman A.G."/>
            <person name="Townsend C.A."/>
        </authorList>
    </citation>
    <scope>FUNCTION</scope>
    <scope>DISRUPTION PHENOTYPE</scope>
    <scope>PATHWAY</scope>
</reference>
<reference key="8">
    <citation type="journal article" date="2019" name="Chem. Sci.">
        <title>Heterologous biosynthesis of elsinochrome A sheds light on the formation of the photosensitive perylenequinone system.</title>
        <authorList>
            <person name="Hu J."/>
            <person name="Sarrami F."/>
            <person name="Li H."/>
            <person name="Zhang G."/>
            <person name="Stubbs K.A."/>
            <person name="Lacey E."/>
            <person name="Stewart S.G."/>
            <person name="Karton A."/>
            <person name="Piggott A.M."/>
            <person name="Chooi Y.H."/>
        </authorList>
    </citation>
    <scope>FUNCTION</scope>
</reference>
<protein>
    <recommendedName>
        <fullName evidence="11">FAD-dependent monooxygenase CTB5</fullName>
        <ecNumber evidence="13">1.-.-.-</ecNumber>
    </recommendedName>
    <alternativeName>
        <fullName evidence="11">Cercosporin toxin biosynthesis cluster protein 5</fullName>
    </alternativeName>
</protein>
<evidence type="ECO:0000250" key="1">
    <source>
        <dbReference type="UniProtKB" id="Q0UHZ9"/>
    </source>
</evidence>
<evidence type="ECO:0000255" key="2">
    <source>
        <dbReference type="PROSITE-ProRule" id="PRU00718"/>
    </source>
</evidence>
<evidence type="ECO:0000269" key="3">
    <source>
    </source>
</evidence>
<evidence type="ECO:0000269" key="4">
    <source>
    </source>
</evidence>
<evidence type="ECO:0000269" key="5">
    <source>
    </source>
</evidence>
<evidence type="ECO:0000269" key="6">
    <source>
    </source>
</evidence>
<evidence type="ECO:0000269" key="7">
    <source>
    </source>
</evidence>
<evidence type="ECO:0000269" key="8">
    <source>
    </source>
</evidence>
<evidence type="ECO:0000269" key="9">
    <source>
    </source>
</evidence>
<evidence type="ECO:0000303" key="10">
    <source>
    </source>
</evidence>
<evidence type="ECO:0000303" key="11">
    <source>
    </source>
</evidence>
<evidence type="ECO:0000305" key="12"/>
<evidence type="ECO:0000305" key="13">
    <source>
    </source>
</evidence>
<proteinExistence type="evidence at transcript level"/>
<accession>A0ST43</accession>